<accession>Q0HF55</accession>
<dbReference type="EC" id="1.14.11.-" evidence="1"/>
<dbReference type="EMBL" id="CP000446">
    <property type="protein sequence ID" value="ABI40312.1"/>
    <property type="molecule type" value="Genomic_DNA"/>
</dbReference>
<dbReference type="RefSeq" id="WP_011623983.1">
    <property type="nucleotide sequence ID" value="NC_008321.1"/>
</dbReference>
<dbReference type="SMR" id="Q0HF55"/>
<dbReference type="KEGG" id="she:Shewmr4_3244"/>
<dbReference type="HOGENOM" id="CLU_106663_0_0_6"/>
<dbReference type="GO" id="GO:0016706">
    <property type="term" value="F:2-oxoglutarate-dependent dioxygenase activity"/>
    <property type="evidence" value="ECO:0007669"/>
    <property type="project" value="UniProtKB-UniRule"/>
</dbReference>
<dbReference type="GO" id="GO:0005506">
    <property type="term" value="F:iron ion binding"/>
    <property type="evidence" value="ECO:0007669"/>
    <property type="project" value="UniProtKB-UniRule"/>
</dbReference>
<dbReference type="GO" id="GO:0031418">
    <property type="term" value="F:L-ascorbic acid binding"/>
    <property type="evidence" value="ECO:0007669"/>
    <property type="project" value="UniProtKB-KW"/>
</dbReference>
<dbReference type="GO" id="GO:0006974">
    <property type="term" value="P:DNA damage response"/>
    <property type="evidence" value="ECO:0007669"/>
    <property type="project" value="TreeGrafter"/>
</dbReference>
<dbReference type="GO" id="GO:0006879">
    <property type="term" value="P:intracellular iron ion homeostasis"/>
    <property type="evidence" value="ECO:0007669"/>
    <property type="project" value="TreeGrafter"/>
</dbReference>
<dbReference type="FunFam" id="2.60.120.620:FF:000006">
    <property type="entry name" value="PKHD-type hydroxylase YbiX"/>
    <property type="match status" value="1"/>
</dbReference>
<dbReference type="Gene3D" id="2.60.120.620">
    <property type="entry name" value="q2cbj1_9rhob like domain"/>
    <property type="match status" value="1"/>
</dbReference>
<dbReference type="Gene3D" id="4.10.860.20">
    <property type="entry name" value="Rabenosyn, Rab binding domain"/>
    <property type="match status" value="1"/>
</dbReference>
<dbReference type="HAMAP" id="MF_00657">
    <property type="entry name" value="Hydroxyl_YbiX"/>
    <property type="match status" value="1"/>
</dbReference>
<dbReference type="InterPro" id="IPR005123">
    <property type="entry name" value="Oxoglu/Fe-dep_dioxygenase_dom"/>
</dbReference>
<dbReference type="InterPro" id="IPR041097">
    <property type="entry name" value="PKHD_C"/>
</dbReference>
<dbReference type="InterPro" id="IPR023550">
    <property type="entry name" value="PKHD_hydroxylase"/>
</dbReference>
<dbReference type="InterPro" id="IPR006620">
    <property type="entry name" value="Pro_4_hyd_alph"/>
</dbReference>
<dbReference type="InterPro" id="IPR044862">
    <property type="entry name" value="Pro_4_hyd_alph_FE2OG_OXY"/>
</dbReference>
<dbReference type="NCBIfam" id="NF003974">
    <property type="entry name" value="PRK05467.1-3"/>
    <property type="match status" value="1"/>
</dbReference>
<dbReference type="NCBIfam" id="NF003975">
    <property type="entry name" value="PRK05467.1-4"/>
    <property type="match status" value="1"/>
</dbReference>
<dbReference type="PANTHER" id="PTHR41536">
    <property type="entry name" value="PKHD-TYPE HYDROXYLASE YBIX"/>
    <property type="match status" value="1"/>
</dbReference>
<dbReference type="PANTHER" id="PTHR41536:SF1">
    <property type="entry name" value="PKHD-TYPE HYDROXYLASE YBIX"/>
    <property type="match status" value="1"/>
</dbReference>
<dbReference type="Pfam" id="PF13640">
    <property type="entry name" value="2OG-FeII_Oxy_3"/>
    <property type="match status" value="1"/>
</dbReference>
<dbReference type="Pfam" id="PF18331">
    <property type="entry name" value="PKHD_C"/>
    <property type="match status" value="1"/>
</dbReference>
<dbReference type="SMART" id="SM00702">
    <property type="entry name" value="P4Hc"/>
    <property type="match status" value="1"/>
</dbReference>
<dbReference type="SUPFAM" id="SSF51197">
    <property type="entry name" value="Clavaminate synthase-like"/>
    <property type="match status" value="1"/>
</dbReference>
<dbReference type="PROSITE" id="PS51471">
    <property type="entry name" value="FE2OG_OXY"/>
    <property type="match status" value="1"/>
</dbReference>
<keyword id="KW-0223">Dioxygenase</keyword>
<keyword id="KW-0408">Iron</keyword>
<keyword id="KW-0479">Metal-binding</keyword>
<keyword id="KW-0560">Oxidoreductase</keyword>
<keyword id="KW-0847">Vitamin C</keyword>
<protein>
    <recommendedName>
        <fullName evidence="1">PKHD-type hydroxylase Shewmr4_3244</fullName>
        <ecNumber evidence="1">1.14.11.-</ecNumber>
    </recommendedName>
</protein>
<sequence>MLIEIPNVFSKEEVNQLREELDARTWIDGNQTSGVMASTRKRNQQLDKDDPVALQIGELIMARLLAHPLFVSAALPLQFYPPLFNRYQGGETFGYHIDNAIRSTSEGMVRTDLSATLFLSEPDTYQGGELVIQDTYGQQSIKLAAGSLVLYPSTSLHQVTPVTSGERTAAFMWLQSMVRDEGQRRLLFQLDQSIQALTAQAASEQELFNLTGVYHNLLRRWSEL</sequence>
<reference key="1">
    <citation type="submission" date="2006-08" db="EMBL/GenBank/DDBJ databases">
        <title>Complete sequence of Shewanella sp. MR-4.</title>
        <authorList>
            <consortium name="US DOE Joint Genome Institute"/>
            <person name="Copeland A."/>
            <person name="Lucas S."/>
            <person name="Lapidus A."/>
            <person name="Barry K."/>
            <person name="Detter J.C."/>
            <person name="Glavina del Rio T."/>
            <person name="Hammon N."/>
            <person name="Israni S."/>
            <person name="Dalin E."/>
            <person name="Tice H."/>
            <person name="Pitluck S."/>
            <person name="Kiss H."/>
            <person name="Brettin T."/>
            <person name="Bruce D."/>
            <person name="Han C."/>
            <person name="Tapia R."/>
            <person name="Gilna P."/>
            <person name="Schmutz J."/>
            <person name="Larimer F."/>
            <person name="Land M."/>
            <person name="Hauser L."/>
            <person name="Kyrpides N."/>
            <person name="Mikhailova N."/>
            <person name="Nealson K."/>
            <person name="Konstantinidis K."/>
            <person name="Klappenbach J."/>
            <person name="Tiedje J."/>
            <person name="Richardson P."/>
        </authorList>
    </citation>
    <scope>NUCLEOTIDE SEQUENCE [LARGE SCALE GENOMIC DNA]</scope>
    <source>
        <strain>MR-4</strain>
    </source>
</reference>
<proteinExistence type="inferred from homology"/>
<name>Y3244_SHESM</name>
<feature type="chain" id="PRO_1000061741" description="PKHD-type hydroxylase Shewmr4_3244">
    <location>
        <begin position="1"/>
        <end position="224"/>
    </location>
</feature>
<feature type="domain" description="Fe2OG dioxygenase" evidence="1">
    <location>
        <begin position="78"/>
        <end position="176"/>
    </location>
</feature>
<feature type="binding site" evidence="1">
    <location>
        <position position="96"/>
    </location>
    <ligand>
        <name>Fe cation</name>
        <dbReference type="ChEBI" id="CHEBI:24875"/>
    </ligand>
</feature>
<feature type="binding site" evidence="1">
    <location>
        <position position="98"/>
    </location>
    <ligand>
        <name>Fe cation</name>
        <dbReference type="ChEBI" id="CHEBI:24875"/>
    </ligand>
</feature>
<feature type="binding site" evidence="1">
    <location>
        <position position="157"/>
    </location>
    <ligand>
        <name>Fe cation</name>
        <dbReference type="ChEBI" id="CHEBI:24875"/>
    </ligand>
</feature>
<feature type="binding site" evidence="1">
    <location>
        <position position="167"/>
    </location>
    <ligand>
        <name>2-oxoglutarate</name>
        <dbReference type="ChEBI" id="CHEBI:16810"/>
    </ligand>
</feature>
<comment type="cofactor">
    <cofactor evidence="1">
        <name>Fe(2+)</name>
        <dbReference type="ChEBI" id="CHEBI:29033"/>
    </cofactor>
    <text evidence="1">Binds 1 Fe(2+) ion per subunit.</text>
</comment>
<comment type="cofactor">
    <cofactor evidence="1">
        <name>L-ascorbate</name>
        <dbReference type="ChEBI" id="CHEBI:38290"/>
    </cofactor>
</comment>
<organism>
    <name type="scientific">Shewanella sp. (strain MR-4)</name>
    <dbReference type="NCBI Taxonomy" id="60480"/>
    <lineage>
        <taxon>Bacteria</taxon>
        <taxon>Pseudomonadati</taxon>
        <taxon>Pseudomonadota</taxon>
        <taxon>Gammaproteobacteria</taxon>
        <taxon>Alteromonadales</taxon>
        <taxon>Shewanellaceae</taxon>
        <taxon>Shewanella</taxon>
    </lineage>
</organism>
<gene>
    <name type="ordered locus">Shewmr4_3244</name>
</gene>
<evidence type="ECO:0000255" key="1">
    <source>
        <dbReference type="HAMAP-Rule" id="MF_00657"/>
    </source>
</evidence>